<sequence>MVSVGTQSHSGRDQAEQNPSVENVRYDWQLDEALAIYNLPLLELIGRANSVHRRYHDAGHLQKSSLLSIKTGGCPEDCGYCSQSAHHDVELTREKLMNPTAVIGLAAKAKKAGAERFCMGAAWRKVRDGKEFDAVLEMIRGVRALDMEACVTLGMVNEDQARRLAEAGLTAYNHNLDTGPAYYPQIVSTHSYQDRLETLAKIRDAGIALCTGGIIGLGESPRDRVEMLVVLAGMNPHPESVPVNMLVPIEGTPLADADPVDPLEIVRMIATARLMMPQSMVRLSAGRSTLSRETQILCLVAGANSIFYGNVLLTTPNADMAADDALLEALGVTAE</sequence>
<gene>
    <name evidence="1" type="primary">bioB</name>
    <name type="ordered locus">ZMO0094</name>
</gene>
<protein>
    <recommendedName>
        <fullName evidence="1">Biotin synthase</fullName>
        <ecNumber evidence="1">2.8.1.6</ecNumber>
    </recommendedName>
</protein>
<keyword id="KW-0001">2Fe-2S</keyword>
<keyword id="KW-0004">4Fe-4S</keyword>
<keyword id="KW-0093">Biotin biosynthesis</keyword>
<keyword id="KW-0408">Iron</keyword>
<keyword id="KW-0411">Iron-sulfur</keyword>
<keyword id="KW-0479">Metal-binding</keyword>
<keyword id="KW-1185">Reference proteome</keyword>
<keyword id="KW-0949">S-adenosyl-L-methionine</keyword>
<keyword id="KW-0808">Transferase</keyword>
<comment type="function">
    <text evidence="1">Catalyzes the conversion of dethiobiotin (DTB) to biotin by the insertion of a sulfur atom into dethiobiotin via a radical-based mechanism.</text>
</comment>
<comment type="catalytic activity">
    <reaction evidence="1">
        <text>(4R,5S)-dethiobiotin + (sulfur carrier)-SH + 2 reduced [2Fe-2S]-[ferredoxin] + 2 S-adenosyl-L-methionine = (sulfur carrier)-H + biotin + 2 5'-deoxyadenosine + 2 L-methionine + 2 oxidized [2Fe-2S]-[ferredoxin]</text>
        <dbReference type="Rhea" id="RHEA:22060"/>
        <dbReference type="Rhea" id="RHEA-COMP:10000"/>
        <dbReference type="Rhea" id="RHEA-COMP:10001"/>
        <dbReference type="Rhea" id="RHEA-COMP:14737"/>
        <dbReference type="Rhea" id="RHEA-COMP:14739"/>
        <dbReference type="ChEBI" id="CHEBI:17319"/>
        <dbReference type="ChEBI" id="CHEBI:29917"/>
        <dbReference type="ChEBI" id="CHEBI:33737"/>
        <dbReference type="ChEBI" id="CHEBI:33738"/>
        <dbReference type="ChEBI" id="CHEBI:57586"/>
        <dbReference type="ChEBI" id="CHEBI:57844"/>
        <dbReference type="ChEBI" id="CHEBI:59789"/>
        <dbReference type="ChEBI" id="CHEBI:64428"/>
        <dbReference type="ChEBI" id="CHEBI:149473"/>
        <dbReference type="EC" id="2.8.1.6"/>
    </reaction>
</comment>
<comment type="cofactor">
    <cofactor evidence="1">
        <name>[4Fe-4S] cluster</name>
        <dbReference type="ChEBI" id="CHEBI:49883"/>
    </cofactor>
    <text evidence="1">Binds 1 [4Fe-4S] cluster. The cluster is coordinated with 3 cysteines and an exchangeable S-adenosyl-L-methionine.</text>
</comment>
<comment type="cofactor">
    <cofactor evidence="1">
        <name>[2Fe-2S] cluster</name>
        <dbReference type="ChEBI" id="CHEBI:190135"/>
    </cofactor>
    <text evidence="1">Binds 1 [2Fe-2S] cluster. The cluster is coordinated with 3 cysteines and 1 arginine.</text>
</comment>
<comment type="pathway">
    <text evidence="1">Cofactor biosynthesis; biotin biosynthesis; biotin from 7,8-diaminononanoate: step 2/2.</text>
</comment>
<comment type="subunit">
    <text evidence="1">Homodimer.</text>
</comment>
<comment type="similarity">
    <text evidence="1">Belongs to the radical SAM superfamily. Biotin synthase family.</text>
</comment>
<accession>Q5NRD6</accession>
<proteinExistence type="inferred from homology"/>
<organism>
    <name type="scientific">Zymomonas mobilis subsp. mobilis (strain ATCC 31821 / ZM4 / CP4)</name>
    <dbReference type="NCBI Taxonomy" id="264203"/>
    <lineage>
        <taxon>Bacteria</taxon>
        <taxon>Pseudomonadati</taxon>
        <taxon>Pseudomonadota</taxon>
        <taxon>Alphaproteobacteria</taxon>
        <taxon>Sphingomonadales</taxon>
        <taxon>Zymomonadaceae</taxon>
        <taxon>Zymomonas</taxon>
    </lineage>
</organism>
<name>BIOB_ZYMMO</name>
<dbReference type="EC" id="2.8.1.6" evidence="1"/>
<dbReference type="EMBL" id="AE008692">
    <property type="protein sequence ID" value="AAV88718.2"/>
    <property type="molecule type" value="Genomic_DNA"/>
</dbReference>
<dbReference type="RefSeq" id="WP_011240066.1">
    <property type="nucleotide sequence ID" value="NZ_CP035711.1"/>
</dbReference>
<dbReference type="SMR" id="Q5NRD6"/>
<dbReference type="STRING" id="264203.ZMO0094"/>
<dbReference type="KEGG" id="zmo:ZMO0094"/>
<dbReference type="eggNOG" id="COG0502">
    <property type="taxonomic scope" value="Bacteria"/>
</dbReference>
<dbReference type="HOGENOM" id="CLU_033172_1_2_5"/>
<dbReference type="UniPathway" id="UPA00078">
    <property type="reaction ID" value="UER00162"/>
</dbReference>
<dbReference type="Proteomes" id="UP000001173">
    <property type="component" value="Chromosome"/>
</dbReference>
<dbReference type="GO" id="GO:0051537">
    <property type="term" value="F:2 iron, 2 sulfur cluster binding"/>
    <property type="evidence" value="ECO:0007669"/>
    <property type="project" value="UniProtKB-KW"/>
</dbReference>
<dbReference type="GO" id="GO:0051539">
    <property type="term" value="F:4 iron, 4 sulfur cluster binding"/>
    <property type="evidence" value="ECO:0007669"/>
    <property type="project" value="UniProtKB-KW"/>
</dbReference>
<dbReference type="GO" id="GO:0004076">
    <property type="term" value="F:biotin synthase activity"/>
    <property type="evidence" value="ECO:0007669"/>
    <property type="project" value="UniProtKB-UniRule"/>
</dbReference>
<dbReference type="GO" id="GO:0005506">
    <property type="term" value="F:iron ion binding"/>
    <property type="evidence" value="ECO:0007669"/>
    <property type="project" value="UniProtKB-UniRule"/>
</dbReference>
<dbReference type="GO" id="GO:0009102">
    <property type="term" value="P:biotin biosynthetic process"/>
    <property type="evidence" value="ECO:0007669"/>
    <property type="project" value="UniProtKB-UniRule"/>
</dbReference>
<dbReference type="CDD" id="cd01335">
    <property type="entry name" value="Radical_SAM"/>
    <property type="match status" value="1"/>
</dbReference>
<dbReference type="Gene3D" id="3.20.20.70">
    <property type="entry name" value="Aldolase class I"/>
    <property type="match status" value="1"/>
</dbReference>
<dbReference type="HAMAP" id="MF_01694">
    <property type="entry name" value="BioB"/>
    <property type="match status" value="1"/>
</dbReference>
<dbReference type="InterPro" id="IPR013785">
    <property type="entry name" value="Aldolase_TIM"/>
</dbReference>
<dbReference type="InterPro" id="IPR010722">
    <property type="entry name" value="BATS_dom"/>
</dbReference>
<dbReference type="InterPro" id="IPR002684">
    <property type="entry name" value="Biotin_synth/BioAB"/>
</dbReference>
<dbReference type="InterPro" id="IPR024177">
    <property type="entry name" value="Biotin_synthase"/>
</dbReference>
<dbReference type="InterPro" id="IPR006638">
    <property type="entry name" value="Elp3/MiaA/NifB-like_rSAM"/>
</dbReference>
<dbReference type="InterPro" id="IPR007197">
    <property type="entry name" value="rSAM"/>
</dbReference>
<dbReference type="NCBIfam" id="TIGR00433">
    <property type="entry name" value="bioB"/>
    <property type="match status" value="1"/>
</dbReference>
<dbReference type="PANTHER" id="PTHR22976">
    <property type="entry name" value="BIOTIN SYNTHASE"/>
    <property type="match status" value="1"/>
</dbReference>
<dbReference type="PANTHER" id="PTHR22976:SF2">
    <property type="entry name" value="BIOTIN SYNTHASE, MITOCHONDRIAL"/>
    <property type="match status" value="1"/>
</dbReference>
<dbReference type="Pfam" id="PF06968">
    <property type="entry name" value="BATS"/>
    <property type="match status" value="1"/>
</dbReference>
<dbReference type="Pfam" id="PF04055">
    <property type="entry name" value="Radical_SAM"/>
    <property type="match status" value="1"/>
</dbReference>
<dbReference type="PIRSF" id="PIRSF001619">
    <property type="entry name" value="Biotin_synth"/>
    <property type="match status" value="1"/>
</dbReference>
<dbReference type="SFLD" id="SFLDG01060">
    <property type="entry name" value="BATS_domain_containing"/>
    <property type="match status" value="1"/>
</dbReference>
<dbReference type="SFLD" id="SFLDF00272">
    <property type="entry name" value="biotin_synthase"/>
    <property type="match status" value="1"/>
</dbReference>
<dbReference type="SMART" id="SM00876">
    <property type="entry name" value="BATS"/>
    <property type="match status" value="1"/>
</dbReference>
<dbReference type="SMART" id="SM00729">
    <property type="entry name" value="Elp3"/>
    <property type="match status" value="1"/>
</dbReference>
<dbReference type="SUPFAM" id="SSF102114">
    <property type="entry name" value="Radical SAM enzymes"/>
    <property type="match status" value="1"/>
</dbReference>
<dbReference type="PROSITE" id="PS51918">
    <property type="entry name" value="RADICAL_SAM"/>
    <property type="match status" value="1"/>
</dbReference>
<feature type="chain" id="PRO_0000381729" description="Biotin synthase">
    <location>
        <begin position="1"/>
        <end position="335"/>
    </location>
</feature>
<feature type="domain" description="Radical SAM core" evidence="2">
    <location>
        <begin position="59"/>
        <end position="284"/>
    </location>
</feature>
<feature type="region of interest" description="Disordered" evidence="3">
    <location>
        <begin position="1"/>
        <end position="20"/>
    </location>
</feature>
<feature type="binding site" evidence="1">
    <location>
        <position position="74"/>
    </location>
    <ligand>
        <name>[4Fe-4S] cluster</name>
        <dbReference type="ChEBI" id="CHEBI:49883"/>
        <note>4Fe-4S-S-AdoMet</note>
    </ligand>
</feature>
<feature type="binding site" evidence="1">
    <location>
        <position position="78"/>
    </location>
    <ligand>
        <name>[4Fe-4S] cluster</name>
        <dbReference type="ChEBI" id="CHEBI:49883"/>
        <note>4Fe-4S-S-AdoMet</note>
    </ligand>
</feature>
<feature type="binding site" evidence="1">
    <location>
        <position position="81"/>
    </location>
    <ligand>
        <name>[4Fe-4S] cluster</name>
        <dbReference type="ChEBI" id="CHEBI:49883"/>
        <note>4Fe-4S-S-AdoMet</note>
    </ligand>
</feature>
<feature type="binding site" evidence="1">
    <location>
        <position position="118"/>
    </location>
    <ligand>
        <name>[2Fe-2S] cluster</name>
        <dbReference type="ChEBI" id="CHEBI:190135"/>
    </ligand>
</feature>
<feature type="binding site" evidence="1">
    <location>
        <position position="150"/>
    </location>
    <ligand>
        <name>[2Fe-2S] cluster</name>
        <dbReference type="ChEBI" id="CHEBI:190135"/>
    </ligand>
</feature>
<feature type="binding site" evidence="1">
    <location>
        <position position="210"/>
    </location>
    <ligand>
        <name>[2Fe-2S] cluster</name>
        <dbReference type="ChEBI" id="CHEBI:190135"/>
    </ligand>
</feature>
<feature type="binding site" evidence="1">
    <location>
        <position position="282"/>
    </location>
    <ligand>
        <name>[2Fe-2S] cluster</name>
        <dbReference type="ChEBI" id="CHEBI:190135"/>
    </ligand>
</feature>
<reference key="1">
    <citation type="journal article" date="2005" name="Nat. Biotechnol.">
        <title>The genome sequence of the ethanologenic bacterium Zymomonas mobilis ZM4.</title>
        <authorList>
            <person name="Seo J.-S."/>
            <person name="Chong H."/>
            <person name="Park H.S."/>
            <person name="Yoon K.-O."/>
            <person name="Jung C."/>
            <person name="Kim J.J."/>
            <person name="Hong J.H."/>
            <person name="Kim H."/>
            <person name="Kim J.-H."/>
            <person name="Kil J.-I."/>
            <person name="Park C.J."/>
            <person name="Oh H.-M."/>
            <person name="Lee J.-S."/>
            <person name="Jin S.-J."/>
            <person name="Um H.-W."/>
            <person name="Lee H.-J."/>
            <person name="Oh S.-J."/>
            <person name="Kim J.Y."/>
            <person name="Kang H.L."/>
            <person name="Lee S.Y."/>
            <person name="Lee K.J."/>
            <person name="Kang H.S."/>
        </authorList>
    </citation>
    <scope>NUCLEOTIDE SEQUENCE [LARGE SCALE GENOMIC DNA]</scope>
    <source>
        <strain>ATCC 31821 / ZM4 / CP4</strain>
    </source>
</reference>
<evidence type="ECO:0000255" key="1">
    <source>
        <dbReference type="HAMAP-Rule" id="MF_01694"/>
    </source>
</evidence>
<evidence type="ECO:0000255" key="2">
    <source>
        <dbReference type="PROSITE-ProRule" id="PRU01266"/>
    </source>
</evidence>
<evidence type="ECO:0000256" key="3">
    <source>
        <dbReference type="SAM" id="MobiDB-lite"/>
    </source>
</evidence>